<gene>
    <name evidence="4" type="primary">POLAR</name>
    <name evidence="5" type="ordered locus">At4g31805</name>
    <name evidence="6" type="ORF">F28M20</name>
</gene>
<protein>
    <recommendedName>
        <fullName evidence="4">Protein POLAR LOCALIZATION DURING ASYMMETRIC DIVISION AND REDISTRIBUTION</fullName>
    </recommendedName>
</protein>
<organism>
    <name type="scientific">Arabidopsis thaliana</name>
    <name type="common">Mouse-ear cress</name>
    <dbReference type="NCBI Taxonomy" id="3702"/>
    <lineage>
        <taxon>Eukaryota</taxon>
        <taxon>Viridiplantae</taxon>
        <taxon>Streptophyta</taxon>
        <taxon>Embryophyta</taxon>
        <taxon>Tracheophyta</taxon>
        <taxon>Spermatophyta</taxon>
        <taxon>Magnoliopsida</taxon>
        <taxon>eudicotyledons</taxon>
        <taxon>Gunneridae</taxon>
        <taxon>Pentapetalae</taxon>
        <taxon>rosids</taxon>
        <taxon>malvids</taxon>
        <taxon>Brassicales</taxon>
        <taxon>Brassicaceae</taxon>
        <taxon>Camelineae</taxon>
        <taxon>Arabidopsis</taxon>
    </lineage>
</organism>
<reference key="1">
    <citation type="journal article" date="2011" name="Plant Cell">
        <title>Molecular profiling of stomatal meristemoids reveals new component of asymmetric cell division and commonalities among stem cell populations in Arabidopsis.</title>
        <authorList>
            <person name="Pillitteri L.J."/>
            <person name="Peterson K.M."/>
            <person name="Horst R.J."/>
            <person name="Torii K.U."/>
        </authorList>
    </citation>
    <scope>NUCLEOTIDE SEQUENCE [MRNA]</scope>
    <scope>FUNCTION</scope>
    <scope>DISRUPTION PHENOTYPE</scope>
    <scope>SUBCELLULAR LOCATION</scope>
    <scope>DEVELOPMENTAL STAGE</scope>
    <scope>TISSUE SPECIFICITY</scope>
    <source>
        <strain>cv. Columbia</strain>
        <tissue>Seedling</tissue>
    </source>
</reference>
<reference key="2">
    <citation type="journal article" date="1999" name="Nature">
        <title>Sequence and analysis of chromosome 4 of the plant Arabidopsis thaliana.</title>
        <authorList>
            <person name="Mayer K.F.X."/>
            <person name="Schueller C."/>
            <person name="Wambutt R."/>
            <person name="Murphy G."/>
            <person name="Volckaert G."/>
            <person name="Pohl T."/>
            <person name="Duesterhoeft A."/>
            <person name="Stiekema W."/>
            <person name="Entian K.-D."/>
            <person name="Terryn N."/>
            <person name="Harris B."/>
            <person name="Ansorge W."/>
            <person name="Brandt P."/>
            <person name="Grivell L.A."/>
            <person name="Rieger M."/>
            <person name="Weichselgartner M."/>
            <person name="de Simone V."/>
            <person name="Obermaier B."/>
            <person name="Mache R."/>
            <person name="Mueller M."/>
            <person name="Kreis M."/>
            <person name="Delseny M."/>
            <person name="Puigdomenech P."/>
            <person name="Watson M."/>
            <person name="Schmidtheini T."/>
            <person name="Reichert B."/>
            <person name="Portetelle D."/>
            <person name="Perez-Alonso M."/>
            <person name="Boutry M."/>
            <person name="Bancroft I."/>
            <person name="Vos P."/>
            <person name="Hoheisel J."/>
            <person name="Zimmermann W."/>
            <person name="Wedler H."/>
            <person name="Ridley P."/>
            <person name="Langham S.-A."/>
            <person name="McCullagh B."/>
            <person name="Bilham L."/>
            <person name="Robben J."/>
            <person name="van der Schueren J."/>
            <person name="Grymonprez B."/>
            <person name="Chuang Y.-J."/>
            <person name="Vandenbussche F."/>
            <person name="Braeken M."/>
            <person name="Weltjens I."/>
            <person name="Voet M."/>
            <person name="Bastiaens I."/>
            <person name="Aert R."/>
            <person name="Defoor E."/>
            <person name="Weitzenegger T."/>
            <person name="Bothe G."/>
            <person name="Ramsperger U."/>
            <person name="Hilbert H."/>
            <person name="Braun M."/>
            <person name="Holzer E."/>
            <person name="Brandt A."/>
            <person name="Peters S."/>
            <person name="van Staveren M."/>
            <person name="Dirkse W."/>
            <person name="Mooijman P."/>
            <person name="Klein Lankhorst R."/>
            <person name="Rose M."/>
            <person name="Hauf J."/>
            <person name="Koetter P."/>
            <person name="Berneiser S."/>
            <person name="Hempel S."/>
            <person name="Feldpausch M."/>
            <person name="Lamberth S."/>
            <person name="Van den Daele H."/>
            <person name="De Keyser A."/>
            <person name="Buysshaert C."/>
            <person name="Gielen J."/>
            <person name="Villarroel R."/>
            <person name="De Clercq R."/>
            <person name="van Montagu M."/>
            <person name="Rogers J."/>
            <person name="Cronin A."/>
            <person name="Quail M.A."/>
            <person name="Bray-Allen S."/>
            <person name="Clark L."/>
            <person name="Doggett J."/>
            <person name="Hall S."/>
            <person name="Kay M."/>
            <person name="Lennard N."/>
            <person name="McLay K."/>
            <person name="Mayes R."/>
            <person name="Pettett A."/>
            <person name="Rajandream M.A."/>
            <person name="Lyne M."/>
            <person name="Benes V."/>
            <person name="Rechmann S."/>
            <person name="Borkova D."/>
            <person name="Bloecker H."/>
            <person name="Scharfe M."/>
            <person name="Grimm M."/>
            <person name="Loehnert T.-H."/>
            <person name="Dose S."/>
            <person name="de Haan M."/>
            <person name="Maarse A.C."/>
            <person name="Schaefer M."/>
            <person name="Mueller-Auer S."/>
            <person name="Gabel C."/>
            <person name="Fuchs M."/>
            <person name="Fartmann B."/>
            <person name="Granderath K."/>
            <person name="Dauner D."/>
            <person name="Herzl A."/>
            <person name="Neumann S."/>
            <person name="Argiriou A."/>
            <person name="Vitale D."/>
            <person name="Liguori R."/>
            <person name="Piravandi E."/>
            <person name="Massenet O."/>
            <person name="Quigley F."/>
            <person name="Clabauld G."/>
            <person name="Muendlein A."/>
            <person name="Felber R."/>
            <person name="Schnabl S."/>
            <person name="Hiller R."/>
            <person name="Schmidt W."/>
            <person name="Lecharny A."/>
            <person name="Aubourg S."/>
            <person name="Chefdor F."/>
            <person name="Cooke R."/>
            <person name="Berger C."/>
            <person name="Monfort A."/>
            <person name="Casacuberta E."/>
            <person name="Gibbons T."/>
            <person name="Weber N."/>
            <person name="Vandenbol M."/>
            <person name="Bargues M."/>
            <person name="Terol J."/>
            <person name="Torres A."/>
            <person name="Perez-Perez A."/>
            <person name="Purnelle B."/>
            <person name="Bent E."/>
            <person name="Johnson S."/>
            <person name="Tacon D."/>
            <person name="Jesse T."/>
            <person name="Heijnen L."/>
            <person name="Schwarz S."/>
            <person name="Scholler P."/>
            <person name="Heber S."/>
            <person name="Francs P."/>
            <person name="Bielke C."/>
            <person name="Frishman D."/>
            <person name="Haase D."/>
            <person name="Lemcke K."/>
            <person name="Mewes H.-W."/>
            <person name="Stocker S."/>
            <person name="Zaccaria P."/>
            <person name="Bevan M."/>
            <person name="Wilson R.K."/>
            <person name="de la Bastide M."/>
            <person name="Habermann K."/>
            <person name="Parnell L."/>
            <person name="Dedhia N."/>
            <person name="Gnoj L."/>
            <person name="Schutz K."/>
            <person name="Huang E."/>
            <person name="Spiegel L."/>
            <person name="Sekhon M."/>
            <person name="Murray J."/>
            <person name="Sheet P."/>
            <person name="Cordes M."/>
            <person name="Abu-Threideh J."/>
            <person name="Stoneking T."/>
            <person name="Kalicki J."/>
            <person name="Graves T."/>
            <person name="Harmon G."/>
            <person name="Edwards J."/>
            <person name="Latreille P."/>
            <person name="Courtney L."/>
            <person name="Cloud J."/>
            <person name="Abbott A."/>
            <person name="Scott K."/>
            <person name="Johnson D."/>
            <person name="Minx P."/>
            <person name="Bentley D."/>
            <person name="Fulton B."/>
            <person name="Miller N."/>
            <person name="Greco T."/>
            <person name="Kemp K."/>
            <person name="Kramer J."/>
            <person name="Fulton L."/>
            <person name="Mardis E."/>
            <person name="Dante M."/>
            <person name="Pepin K."/>
            <person name="Hillier L.W."/>
            <person name="Nelson J."/>
            <person name="Spieth J."/>
            <person name="Ryan E."/>
            <person name="Andrews S."/>
            <person name="Geisel C."/>
            <person name="Layman D."/>
            <person name="Du H."/>
            <person name="Ali J."/>
            <person name="Berghoff A."/>
            <person name="Jones K."/>
            <person name="Drone K."/>
            <person name="Cotton M."/>
            <person name="Joshu C."/>
            <person name="Antonoiu B."/>
            <person name="Zidanic M."/>
            <person name="Strong C."/>
            <person name="Sun H."/>
            <person name="Lamar B."/>
            <person name="Yordan C."/>
            <person name="Ma P."/>
            <person name="Zhong J."/>
            <person name="Preston R."/>
            <person name="Vil D."/>
            <person name="Shekher M."/>
            <person name="Matero A."/>
            <person name="Shah R."/>
            <person name="Swaby I.K."/>
            <person name="O'Shaughnessy A."/>
            <person name="Rodriguez M."/>
            <person name="Hoffman J."/>
            <person name="Till S."/>
            <person name="Granat S."/>
            <person name="Shohdy N."/>
            <person name="Hasegawa A."/>
            <person name="Hameed A."/>
            <person name="Lodhi M."/>
            <person name="Johnson A."/>
            <person name="Chen E."/>
            <person name="Marra M.A."/>
            <person name="Martienssen R."/>
            <person name="McCombie W.R."/>
        </authorList>
    </citation>
    <scope>NUCLEOTIDE SEQUENCE [LARGE SCALE GENOMIC DNA]</scope>
    <source>
        <strain>cv. Columbia</strain>
    </source>
</reference>
<reference key="3">
    <citation type="journal article" date="2017" name="Plant J.">
        <title>Araport11: a complete reannotation of the Arabidopsis thaliana reference genome.</title>
        <authorList>
            <person name="Cheng C.Y."/>
            <person name="Krishnakumar V."/>
            <person name="Chan A.P."/>
            <person name="Thibaud-Nissen F."/>
            <person name="Schobel S."/>
            <person name="Town C.D."/>
        </authorList>
    </citation>
    <scope>GENOME REANNOTATION</scope>
    <source>
        <strain>cv. Columbia</strain>
    </source>
</reference>
<reference key="4">
    <citation type="journal article" date="2003" name="Science">
        <title>Empirical analysis of transcriptional activity in the Arabidopsis genome.</title>
        <authorList>
            <person name="Yamada K."/>
            <person name="Lim J."/>
            <person name="Dale J.M."/>
            <person name="Chen H."/>
            <person name="Shinn P."/>
            <person name="Palm C.J."/>
            <person name="Southwick A.M."/>
            <person name="Wu H.C."/>
            <person name="Kim C.J."/>
            <person name="Nguyen M."/>
            <person name="Pham P.K."/>
            <person name="Cheuk R.F."/>
            <person name="Karlin-Newmann G."/>
            <person name="Liu S.X."/>
            <person name="Lam B."/>
            <person name="Sakano H."/>
            <person name="Wu T."/>
            <person name="Yu G."/>
            <person name="Miranda M."/>
            <person name="Quach H.L."/>
            <person name="Tripp M."/>
            <person name="Chang C.H."/>
            <person name="Lee J.M."/>
            <person name="Toriumi M.J."/>
            <person name="Chan M.M."/>
            <person name="Tang C.C."/>
            <person name="Onodera C.S."/>
            <person name="Deng J.M."/>
            <person name="Akiyama K."/>
            <person name="Ansari Y."/>
            <person name="Arakawa T."/>
            <person name="Banh J."/>
            <person name="Banno F."/>
            <person name="Bowser L."/>
            <person name="Brooks S.Y."/>
            <person name="Carninci P."/>
            <person name="Chao Q."/>
            <person name="Choy N."/>
            <person name="Enju A."/>
            <person name="Goldsmith A.D."/>
            <person name="Gurjal M."/>
            <person name="Hansen N.F."/>
            <person name="Hayashizaki Y."/>
            <person name="Johnson-Hopson C."/>
            <person name="Hsuan V.W."/>
            <person name="Iida K."/>
            <person name="Karnes M."/>
            <person name="Khan S."/>
            <person name="Koesema E."/>
            <person name="Ishida J."/>
            <person name="Jiang P.X."/>
            <person name="Jones T."/>
            <person name="Kawai J."/>
            <person name="Kamiya A."/>
            <person name="Meyers C."/>
            <person name="Nakajima M."/>
            <person name="Narusaka M."/>
            <person name="Seki M."/>
            <person name="Sakurai T."/>
            <person name="Satou M."/>
            <person name="Tamse R."/>
            <person name="Vaysberg M."/>
            <person name="Wallender E.K."/>
            <person name="Wong C."/>
            <person name="Yamamura Y."/>
            <person name="Yuan S."/>
            <person name="Shinozaki K."/>
            <person name="Davis R.W."/>
            <person name="Theologis A."/>
            <person name="Ecker J.R."/>
        </authorList>
    </citation>
    <scope>NUCLEOTIDE SEQUENCE [LARGE SCALE MRNA]</scope>
    <source>
        <strain>cv. Columbia</strain>
    </source>
</reference>
<reference key="5">
    <citation type="submission" date="2006-07" db="EMBL/GenBank/DDBJ databases">
        <title>Large-scale analysis of RIKEN Arabidopsis full-length (RAFL) cDNAs.</title>
        <authorList>
            <person name="Totoki Y."/>
            <person name="Seki M."/>
            <person name="Ishida J."/>
            <person name="Nakajima M."/>
            <person name="Enju A."/>
            <person name="Kamiya A."/>
            <person name="Narusaka M."/>
            <person name="Shin-i T."/>
            <person name="Nakagawa M."/>
            <person name="Sakamoto N."/>
            <person name="Oishi K."/>
            <person name="Kohara Y."/>
            <person name="Kobayashi M."/>
            <person name="Toyoda A."/>
            <person name="Sakaki Y."/>
            <person name="Sakurai T."/>
            <person name="Iida K."/>
            <person name="Akiyama K."/>
            <person name="Satou M."/>
            <person name="Toyoda T."/>
            <person name="Konagaya A."/>
            <person name="Carninci P."/>
            <person name="Kawai J."/>
            <person name="Hayashizaki Y."/>
            <person name="Shinozaki K."/>
        </authorList>
    </citation>
    <scope>NUCLEOTIDE SEQUENCE [LARGE SCALE MRNA]</scope>
    <source>
        <strain>cv. Columbia</strain>
    </source>
</reference>
<reference key="6">
    <citation type="journal article" date="2012" name="Curr. Opin. Plant Biol.">
        <title>Division polarity in developing stomata.</title>
        <authorList>
            <person name="Facette M.R."/>
            <person name="Smith L.G."/>
        </authorList>
    </citation>
    <scope>REVIEW</scope>
</reference>
<reference key="7">
    <citation type="journal article" date="2018" name="Nature">
        <title>POLAR-guided signalling complex assembly and localization drive asymmetric cell division.</title>
        <authorList>
            <person name="Houbaert A."/>
            <person name="Zhang C."/>
            <person name="Tiwari M."/>
            <person name="Wang K."/>
            <person name="de Marcos Serrano A."/>
            <person name="Savatin D.V."/>
            <person name="Urs M.J."/>
            <person name="Zhiponova M.K."/>
            <person name="Gudesblat G.E."/>
            <person name="Vanhoutte I."/>
            <person name="Eeckhout D."/>
            <person name="Boeren S."/>
            <person name="Karimi M."/>
            <person name="Betti C."/>
            <person name="Jacobs T."/>
            <person name="Fenoll C."/>
            <person name="Mena M."/>
            <person name="de Vries S."/>
            <person name="De Jaeger G."/>
            <person name="Russinova E."/>
        </authorList>
    </citation>
    <scope>FUNCTION</scope>
    <scope>DISRUPTION PHENOTYPE</scope>
    <scope>PHOSPHORYLATION AT THR-19; SER-79; THR-84; THR-86; SER-91; SER-94; THR-193; THR-217; THR-233; SER-235; SER-308; SER-309; SER-320; SER-321 AND SER-336</scope>
    <scope>MUTAGENESIS OF THR-19; SER-29; SER-33; SER-79; THR-84; THR-86; SER-91; SER-94; THR-141; SER-145; SER-149; SER-159; SER-163; THR-193; SER-197; THR-217; THR-233; SER-235; SER-308; SER-309; SER-320; SER-324; SER-327; SER-331; TYR-332; SER-336 AND THR-340</scope>
    <scope>INTERACTION WITH BASL; ASK7/BIN2 AND ASK3/SK12</scope>
    <scope>SUBCELLULAR LOCATION</scope>
    <scope>DEVELOPMENTAL STAGE</scope>
    <source>
        <strain>cv. Columbia</strain>
    </source>
</reference>
<accession>Q6NQ99</accession>
<feature type="chain" id="PRO_0000429316" description="Protein POLAR LOCALIZATION DURING ASYMMETRIC DIVISION AND REDISTRIBUTION">
    <location>
        <begin position="1"/>
        <end position="344"/>
    </location>
</feature>
<feature type="coiled-coil region" evidence="1">
    <location>
        <begin position="262"/>
        <end position="297"/>
    </location>
</feature>
<feature type="modified residue" description="Phosphothreonine; by ASK7" evidence="3">
    <location>
        <position position="19"/>
    </location>
</feature>
<feature type="modified residue" description="Phosphoserine; by ASK7" evidence="3">
    <location>
        <position position="79"/>
    </location>
</feature>
<feature type="modified residue" description="Phosphothreonine; by ASK7" evidence="3">
    <location>
        <position position="84"/>
    </location>
</feature>
<feature type="modified residue" description="Phosphothreonine; by ASK7" evidence="3">
    <location>
        <position position="86"/>
    </location>
</feature>
<feature type="modified residue" description="Phosphoserine; by ASK7" evidence="3">
    <location>
        <position position="91"/>
    </location>
</feature>
<feature type="modified residue" description="Phosphoserine; by ASK7" evidence="3">
    <location>
        <position position="94"/>
    </location>
</feature>
<feature type="modified residue" description="Phosphothreonine; by ASK7" evidence="3">
    <location>
        <position position="193"/>
    </location>
</feature>
<feature type="modified residue" description="Phosphothreonine; by ASK7" evidence="3">
    <location>
        <position position="217"/>
    </location>
</feature>
<feature type="modified residue" description="Phosphothreonine; by ASK7" evidence="3">
    <location>
        <position position="233"/>
    </location>
</feature>
<feature type="modified residue" description="Phosphoserine; by ASK7" evidence="3">
    <location>
        <position position="235"/>
    </location>
</feature>
<feature type="modified residue" description="Phosphoserine; by ASK7" evidence="3">
    <location>
        <position position="308"/>
    </location>
</feature>
<feature type="modified residue" description="Phosphoserine; by ASK7" evidence="3">
    <location>
        <position position="309"/>
    </location>
</feature>
<feature type="modified residue" description="Phosphoserine; by ASK7" evidence="3">
    <location>
        <position position="320"/>
    </location>
</feature>
<feature type="modified residue" description="Phosphoserine; by ASK7" evidence="3">
    <location>
        <position position="321"/>
    </location>
</feature>
<feature type="modified residue" description="Phosphoserine; by ASK7" evidence="3">
    <location>
        <position position="336"/>
    </location>
</feature>
<feature type="mutagenesis site" description="Reduced ASK7-mediated phosphorylation, enhanced stabilization at the plasma membrane and increased cell division; when associated with A-29, A-33, A-79, A-84, A-86, A-91, A-94, A-141, A-145, A-149, A-159, A-163, A-193, A-197, A-217, A-233, A-235, A-308, A-309, A-320, A-324, A-327, A-331, A-332, A-336 and A-340." evidence="3">
    <original>T</original>
    <variation>A</variation>
    <location>
        <position position="19"/>
    </location>
</feature>
<feature type="mutagenesis site" description="Reduced ASK7-mediated phosphorylation, enhanced stabilization at the plasma membrane and increased cell division; when associated with A-19, A-33, A-79, A-84, A-86, A-91, A-94, A-141, A-145, A-149, A-159, A-163, A-193, A-197, A-217, A-233, A-235, A-308, A-309, A-320, A-324, A-327, A-331, A-332, A-336 and A-340." evidence="3">
    <original>S</original>
    <variation>A</variation>
    <location>
        <position position="29"/>
    </location>
</feature>
<feature type="mutagenesis site" description="Reduced ASK7-mediated phosphorylation, enhanced stabilization at the plasma membrane and increased cell division; when associated with A-19, A-29, A-79, A-84, A-86, A-91, A-94, A-141, A-145, A-149, A-159, A-163, A-193, A-197, A-217, A-233, A-235, A-308, A-309, A-320, A-324, A-327, A-331, A-332, A-336 and A-340." evidence="3">
    <original>S</original>
    <variation>A</variation>
    <location>
        <position position="33"/>
    </location>
</feature>
<feature type="mutagenesis site" description="Reduced ASK7-mediated phosphorylation, enhanced stabilization at the plasma membrane and increased cell division; when associated with A-19, A-29, A-33, A-84, A-86, A-91, A-94, A-141, A-145, A-149, A-159, A-163, A-193, A-197, A-217, A-233, A-235, A-308, A-309, A-320, A-324, A-327, A-331, A-332, A-336 and A-340." evidence="3">
    <original>S</original>
    <variation>A</variation>
    <location>
        <position position="79"/>
    </location>
</feature>
<feature type="mutagenesis site" description="Reduced ASK7-mediated phosphorylation, enhanced stabilization at the plasma membrane and increased cell division; when associated with A-19, A-29, A-33, A-79, A-86, A-91, A-94, A-141, A-145, A-149, A-159, A-163, A-193, A-197, A-217, A-233, A-235, A-308, A-309, A-320, A-324, A-327, A-331, A-332, A-336 and A-340." evidence="3">
    <original>T</original>
    <variation>A</variation>
    <location>
        <position position="84"/>
    </location>
</feature>
<feature type="mutagenesis site" description="Reduced ASK7-mediated phosphorylation, enhanced stabilization at the plasma membrane and increased cell division; when associated with A-19, A-29, A-33, A-79, A-84, A-91, A-94, A-141, A-145, A-149, A-159, A-163, A-193, A-197, A-217, A-233, A-235, A-308, A-309, A-320, A-324, A-327, A-331, A-332, A-336 and A-340." evidence="3">
    <original>T</original>
    <variation>A</variation>
    <location>
        <position position="86"/>
    </location>
</feature>
<feature type="mutagenesis site" description="Reduced ASK7-mediated phosphorylation, enhanced stabilization at the plasma membrane and increased cell division; when associated with A-19, A-29, A-33, A-79, A-84, A-86, A-94, A-141, A-145, A-149, A-159, A-163, A-193, A-197, A-217, A-233, A-235, A-308, A-309, A-320, A-324, A-327, A-331, A-332, A-336 and A-340." evidence="3">
    <original>S</original>
    <variation>A</variation>
    <location>
        <position position="91"/>
    </location>
</feature>
<feature type="mutagenesis site" description="Reduced ASK7-mediated phosphorylation, enhanced stabilization at the plasma membrane and increased cell division; when associated with A-19, A-29, A-33, A-79, A-84, A-86, A-91, A-141, A-145, A-149, A-159, A-163, A-193, A-197, A-217, A-233, A-235, A-308, A-309, A-320, A-324, A-327, A-331, A-332, A-336 and A-340." evidence="3">
    <original>S</original>
    <variation>A</variation>
    <location>
        <position position="94"/>
    </location>
</feature>
<feature type="mutagenesis site" description="Reduced ASK7-mediated phosphorylation, enhanced stabilization at the plasma membrane and increased cell division; when associated with A-19, A-29, A-33, A-79, A-84, A-86, A-91, A-94, A-145, A-149, A-159, A-163, A-193, A-197, A-217, A-233, A-235, A-308, A-309, A-320, A-324, A-327, A-331, A-332, A-336 and A-340." evidence="3">
    <original>T</original>
    <variation>A</variation>
    <location>
        <position position="141"/>
    </location>
</feature>
<feature type="mutagenesis site" description="Reduced ASK7-mediated phosphorylation, enhanced stabilization at the plasma membrane and increased cell division; when associated with A-19, A-29, A-33, A-79, A-84, A-86, A-91, A-94, A-141, A-149, A-159, A-163, A-193, A-197, A-217, A-233, A-235, A-308, A-309, A-320, A-324, A-327, A-331, A-332, A-336 and A-340." evidence="3">
    <original>S</original>
    <variation>A</variation>
    <location>
        <position position="145"/>
    </location>
</feature>
<feature type="mutagenesis site" description="Reduced ASK7-mediated phosphorylation, enhanced stabilization at the plasma membrane and increased cell division; when associated with A-19, A-29, A-33, A-79, A-84, A-86, A-91, A-94, A-141, A-145, A-159, A-163, A-193, A-197, A-217, A-233, A-235, A-308, A-309, A-320, A-324, A-327, A-331, A-332, A-336 and A-340." evidence="3">
    <original>S</original>
    <variation>A</variation>
    <location>
        <position position="149"/>
    </location>
</feature>
<feature type="mutagenesis site" description="Reduced ASK7-mediated phosphorylation, enhanced stabilization at the plasma membrane and increased cell division; when associated with A-19, A-29, A-33, A-79, A-84, A-86, A-91, A-94, A-141, A-145, A-149, A-163, A-193, A-197, A-217, A-233, A-235, A-308, A-309, A-320, A-324, A-327, A-331, A-332, A-336 and A-340." evidence="3">
    <original>S</original>
    <variation>A</variation>
    <location>
        <position position="159"/>
    </location>
</feature>
<feature type="mutagenesis site" description="Reduced ASK7-mediated phosphorylation, enhanced stabilization at the plasma membrane and increased cell division; when associated with A-19, A-29, A-33, A-79, A-84, A-86, A-91, A-94, A-141, A-145, A-149, A-159, A-193, A-197, A-217, A-233, A-235, A-308, A-309, A-320, A-324, A-327, A-331, A-332, A-336 and A-340." evidence="3">
    <original>S</original>
    <variation>A</variation>
    <location>
        <position position="163"/>
    </location>
</feature>
<feature type="mutagenesis site" description="Reduced ASK7-mediated phosphorylation, enhanced stabilization at the plasma membrane and increased cell division; when associated with A-19, A-29, A-33, A-79, A-84, A-86, A-91, A-94, A-141, A-145, A-149, A-159, A-163, A-197, A-217, A-233, A-235, A-308, A-309, A-320, A-324, A-327, A-331, A-332, A-336 and A-340." evidence="3">
    <original>T</original>
    <variation>A</variation>
    <location>
        <position position="193"/>
    </location>
</feature>
<feature type="mutagenesis site" description="Reduced ASK7-mediated phosphorylation, enhanced stabilization at the plasma membrane and increased cell division; when associated with A-19, A-29, A-33, A-79, A-84, A-86, A-91, A-94, A-141, A-145, A-149, A-159, A-163, A-193, A-217, A-233, A-235, A-308, A-309, A-320, A-324, A-327, A-331, A-332, A-336 and A-340." evidence="3">
    <original>S</original>
    <variation>A</variation>
    <location>
        <position position="197"/>
    </location>
</feature>
<feature type="mutagenesis site" description="Reduced ASK7-mediated phosphorylation, enhanced stabilization at the plasma membrane and increased cell division; when associated with A-19, A-29, A-33, A-79, A-84, A-86, A-91, A-94, A-141, A-145, A-149, A-159, A-163, A-193, A-197, A-233, A-235, A-308, A-309, A-320, A-324, A-327, A-331, A-332, A-336 and A-340." evidence="3">
    <original>T</original>
    <variation>A</variation>
    <location>
        <position position="217"/>
    </location>
</feature>
<feature type="mutagenesis site" description="Reduced ASK7-mediated phosphorylation, enhanced stabilization at the plasma membrane and increased cell division; when associated with A-19, A-29, A-33, A-79, A-84, A-86, A-91, A-94, A-141, A-145, A-149, A-159, A-163, A-193, A-197, A-217, A-235, A-308, A-309, A-320, A-324, A-327, A-331, A-332, A-336 and A-340." evidence="3">
    <original>T</original>
    <variation>A</variation>
    <location>
        <position position="233"/>
    </location>
</feature>
<feature type="mutagenesis site" description="Reduced ASK7-mediated phosphorylation, enhanced stabilization at the plasma membrane and increased cell division; when associated with A-19, A-29, A-33, A-79, A-84, A-86, A-91, A-94, A-141, A-145, A-149, A-159, A-163, A-193, A-197, A-217, A-233, A-308, A-309, A-320, A-324, A-327, A-331, A-332, A-336 and A-340." evidence="3">
    <original>S</original>
    <variation>A</variation>
    <location>
        <position position="235"/>
    </location>
</feature>
<feature type="mutagenesis site" description="Reduced ASK7-mediated phosphorylation, enhanced stabilization at the plasma membrane and increased cell division; when associated with A-19, A-29, A-33, A-79, A-84, A-86, A-91, A-94, A-141, A-145, A-149, A-159, A-163, A-193, A-197, A-217, A-233, A-235, A-309, A-320, A-324, A-327, A-331, A-332, A-336 and A-340." evidence="3">
    <original>S</original>
    <variation>A</variation>
    <location>
        <position position="308"/>
    </location>
</feature>
<feature type="mutagenesis site" description="Reduced ASK7-mediated phosphorylation, enhanced stabilization at the plasma membrane and increased cell division; when associated with A-19, A-29, A-33, A-79, A-84, A-86, A-91, A-94, A-141, A-145, A-149, A-159, A-163, A-193, A-197, A-217, A-233, A-235, A-308, A-320, A-324, A-327, A-331, A-332, A-336 and A-340." evidence="3">
    <original>S</original>
    <variation>A</variation>
    <location>
        <position position="309"/>
    </location>
</feature>
<feature type="mutagenesis site" description="Reduced ASK7-mediated phosphorylation, enhanced stabilization at the plasma membrane and increased cell division; when associated with A-19, A-29, A-33, A-79, A-84, A-86, A-91, A-94, A-141, A-145, A-149, A-159, A-163, A-193, A-197, A-217, A-233, A-235, A-308, A-309, A-324, A-327, A-331, A-332, A-336 and A-340." evidence="3">
    <original>S</original>
    <variation>A</variation>
    <location>
        <position position="320"/>
    </location>
</feature>
<feature type="mutagenesis site" description="Reduced ASK7-mediated phosphorylation, enhanced stabilization at the plasma membrane and increased cell division; when associated with A-19, A-29, A-33, A-79, A-84, A-86, A-91, A-94, A-141, A-145, A-149, A-159, A-163, A-193, A-197, A-217, A-233, A-235, A-308, A-309, A-320, A-327, A-331, A-332, A-336 and A-340." evidence="3">
    <original>S</original>
    <variation>A</variation>
    <location>
        <position position="324"/>
    </location>
</feature>
<feature type="mutagenesis site" description="Reduced ASK7-mediated phosphorylation, enhanced stabilization at the plasma membrane and increased cell division; when associated with A-19, A-29, A-33, A-79, A-84, A-86, A-91, A-94, A-141, A-145, A-149, A-159, A-163, A-193, A-197, A-217, A-233, A-235, A-308, A-309, A-320, A-324, A-331, A-332, A-336 and A-340." evidence="3">
    <original>S</original>
    <variation>A</variation>
    <location>
        <position position="327"/>
    </location>
</feature>
<feature type="mutagenesis site" description="Reduced ASK7-mediated phosphorylation, enhanced stabilization at the plasma membrane and increased cell division; when associated with A-19, A-29, A-33, A-79, A-84, A-86, A-91, A-94, A-141, A-145, A-149, A-159, A-163, A-193, A-197, A-217, A-233, A-235, A-308, A-309, A-320, A-324, A-327, A-332, A-336 and A-340." evidence="3">
    <original>S</original>
    <variation>A</variation>
    <location>
        <position position="331"/>
    </location>
</feature>
<feature type="mutagenesis site" description="Reduced ASK7-mediated phosphorylation, enhanced stabilization at the plasma membrane and increased cell division; when associated with A-19, A-29, A-33, A-79, A-84, A-86, A-91, A-94, A-141, A-145, A-149, A-159, A-163, A-193, A-197, A-217, A-233, A-235, A-308, A-309, A-320, A-324, A-327, A-331, A-336 and A-340." evidence="3">
    <original>Y</original>
    <variation>A</variation>
    <location>
        <position position="332"/>
    </location>
</feature>
<feature type="mutagenesis site" description="Reduced ASK7-mediated phosphorylation, enhanced stabilization at the plasma membrane and increased cell division; when associated with A-19, A-29, A-33, A-79, A-84, A-86, A-91, A-94, A-141, A-145, A-149, A-159, A-163, A-193, A-197, A-217, A-233, A-235, A-308, A-309, A-320, A-324, A-327, A-331, A-332 and A-340." evidence="3">
    <original>S</original>
    <variation>A</variation>
    <location>
        <position position="336"/>
    </location>
</feature>
<feature type="mutagenesis site" description="Reduced ASK7-mediated phosphorylation, enhanced stabilization at the plasma membrane and increased cell division; when associated with A-19, A-29, A-33, A-79, A-84, A-86, A-91, A-94, A-141, A-145, A-149, A-159, A-163, A-193, A-197, A-217, A-233, A-235, A-308, A-309, A-320, A-324, A-327, A-331, A-332 and A-336." evidence="3">
    <original>T</original>
    <variation>A</variation>
    <location>
        <position position="340"/>
    </location>
</feature>
<evidence type="ECO:0000255" key="1"/>
<evidence type="ECO:0000269" key="2">
    <source>
    </source>
</evidence>
<evidence type="ECO:0000269" key="3">
    <source>
    </source>
</evidence>
<evidence type="ECO:0000303" key="4">
    <source>
    </source>
</evidence>
<evidence type="ECO:0000312" key="5">
    <source>
        <dbReference type="Araport" id="AT4G31805"/>
    </source>
</evidence>
<evidence type="ECO:0000312" key="6">
    <source>
        <dbReference type="EMBL" id="AL031004"/>
    </source>
</evidence>
<comment type="function">
    <text evidence="2 3">Regulates asymmetric cell division (ACD), especially in stomatal-lineage cells (PubMed:21963668). Acts as a stomatal lineage scaffold which regulates subcellular localization and transient polarization of kinases (e.g. ASK7/BIN2 and ASK3/SK12) involved in ACD in a BASL-dependent manner (PubMed:30429609). Promotes the differentiation of both pavement cells and stomata (PubMed:30429609).</text>
</comment>
<comment type="subunit">
    <text evidence="3">Component of a complex made of POLAR, BASL, ASK7/BIN2 and ASK3/SK12 (PubMed:30429609). Interacts with BASL, ASK7/BIN2 and ASK3/SK12 (PubMed:30429609).</text>
</comment>
<comment type="subcellular location">
    <subcellularLocation>
        <location evidence="2 3">Cytoplasm</location>
    </subcellularLocation>
    <subcellularLocation>
        <location evidence="2 3">Cytoplasm</location>
        <location evidence="2 3">Cell cortex</location>
    </subcellularLocation>
    <text evidence="2 3">Localized throughout the plasma membrane in asymmetric cell division (ACD) precursors (PubMed:30429609). Transient polar localization and segregation unevenly (distal to the newly divided meristemoid and parallel to the division plane) during meristemoid asymmetric divisions in a BASL-dependent manner (PubMed:21963668, PubMed:30429609). Present in the cytoplasm of meristemoids and cell periphery in stomatal lineage ground cells (SLGCs), in a polarized pattern (PubMed:21963668, PubMed:30429609).</text>
</comment>
<comment type="tissue specificity">
    <text evidence="2">Expressed in stomatal lineage cells with asymmetric division potential.</text>
</comment>
<comment type="developmental stage">
    <text evidence="2 3">During germination, first observed in a subset of protodermal cells, likely meristemoid mother cells (MMCs), both in the cytosol and at the cell periphery (PubMed:21963668, PubMed:30429609). Two hours before each asymmetric division occurs, becomes dynamically localized at the cell cortex distal to the division plane, especially in cells of the stomatal lineage. After asymmetric cell division, up-regulated in only one of the daughter cells that will continue to divide asymmetrically (PubMed:21963668).</text>
</comment>
<comment type="PTM">
    <text evidence="3">Phosphorylation by ASK7/BIN2 is increases turnover.</text>
</comment>
<comment type="disruption phenotype">
    <text evidence="2 3">No visible effect (PubMed:21963668). Decreased accumulation of ASK7/BIN2 at the plasma membrane and impaired polarization of ASK7/BIN2 in asymmetric cell division (ACD) precursors thus leading to its nuclear localization in the meristemoids (PubMed:30429609).</text>
</comment>
<name>POLAR_ARATH</name>
<keyword id="KW-0175">Coiled coil</keyword>
<keyword id="KW-0963">Cytoplasm</keyword>
<keyword id="KW-0597">Phosphoprotein</keyword>
<keyword id="KW-1185">Reference proteome</keyword>
<proteinExistence type="evidence at protein level"/>
<dbReference type="EMBL" id="JN663804">
    <property type="protein sequence ID" value="AEQ76834.1"/>
    <property type="molecule type" value="mRNA"/>
</dbReference>
<dbReference type="EMBL" id="AL031004">
    <property type="status" value="NOT_ANNOTATED_CDS"/>
    <property type="molecule type" value="Genomic_DNA"/>
</dbReference>
<dbReference type="EMBL" id="CP002687">
    <property type="protein sequence ID" value="AEE85962.1"/>
    <property type="molecule type" value="Genomic_DNA"/>
</dbReference>
<dbReference type="EMBL" id="BT010559">
    <property type="protein sequence ID" value="AAQ65182.1"/>
    <property type="molecule type" value="mRNA"/>
</dbReference>
<dbReference type="EMBL" id="AK227333">
    <property type="protein sequence ID" value="BAE99346.1"/>
    <property type="molecule type" value="mRNA"/>
</dbReference>
<dbReference type="RefSeq" id="NP_567883.1">
    <property type="nucleotide sequence ID" value="NM_119330.3"/>
</dbReference>
<dbReference type="SMR" id="Q6NQ99"/>
<dbReference type="FunCoup" id="Q6NQ99">
    <property type="interactions" value="175"/>
</dbReference>
<dbReference type="STRING" id="3702.Q6NQ99"/>
<dbReference type="iPTMnet" id="Q6NQ99"/>
<dbReference type="PaxDb" id="3702-AT4G31805.1"/>
<dbReference type="ProteomicsDB" id="236578"/>
<dbReference type="EnsemblPlants" id="AT4G31805.1">
    <property type="protein sequence ID" value="AT4G31805.1"/>
    <property type="gene ID" value="AT4G31805"/>
</dbReference>
<dbReference type="GeneID" id="829309"/>
<dbReference type="Gramene" id="AT4G31805.1">
    <property type="protein sequence ID" value="AT4G31805.1"/>
    <property type="gene ID" value="AT4G31805"/>
</dbReference>
<dbReference type="KEGG" id="ath:AT4G31805"/>
<dbReference type="Araport" id="AT4G31805"/>
<dbReference type="TAIR" id="AT4G31805">
    <property type="gene designation" value="POLAR"/>
</dbReference>
<dbReference type="eggNOG" id="ENOG502RZ5T">
    <property type="taxonomic scope" value="Eukaryota"/>
</dbReference>
<dbReference type="HOGENOM" id="CLU_063347_1_0_1"/>
<dbReference type="InParanoid" id="Q6NQ99"/>
<dbReference type="OMA" id="GEITMEP"/>
<dbReference type="PhylomeDB" id="Q6NQ99"/>
<dbReference type="PRO" id="PR:Q6NQ99"/>
<dbReference type="Proteomes" id="UP000006548">
    <property type="component" value="Chromosome 4"/>
</dbReference>
<dbReference type="ExpressionAtlas" id="Q6NQ99">
    <property type="expression patterns" value="baseline and differential"/>
</dbReference>
<dbReference type="GO" id="GO:0005938">
    <property type="term" value="C:cell cortex"/>
    <property type="evidence" value="ECO:0007669"/>
    <property type="project" value="UniProtKB-SubCell"/>
</dbReference>
<dbReference type="GO" id="GO:0071944">
    <property type="term" value="C:cell periphery"/>
    <property type="evidence" value="ECO:0000314"/>
    <property type="project" value="UniProtKB"/>
</dbReference>
<dbReference type="GO" id="GO:0005737">
    <property type="term" value="C:cytoplasm"/>
    <property type="evidence" value="ECO:0000314"/>
    <property type="project" value="UniProtKB"/>
</dbReference>
<dbReference type="GO" id="GO:0008356">
    <property type="term" value="P:asymmetric cell division"/>
    <property type="evidence" value="ECO:0000316"/>
    <property type="project" value="UniProtKB"/>
</dbReference>
<dbReference type="InterPro" id="IPR040348">
    <property type="entry name" value="POLAR-like"/>
</dbReference>
<dbReference type="PANTHER" id="PTHR33476">
    <property type="entry name" value="EMB|CAB62613.1"/>
    <property type="match status" value="1"/>
</dbReference>
<dbReference type="PANTHER" id="PTHR33476:SF22">
    <property type="entry name" value="PROTEIN POLAR LOCALIZATION DURING ASYMMETRIC DIVISION AND REDISTRIBUTION"/>
    <property type="match status" value="1"/>
</dbReference>
<sequence>MEGSRRRRGDGCTIVQCYTPRRFVGRWLSGLRSSKGKRDAGEEQEDDTRRYQLAPIRCSTSLNQLVMQDNKQNCRLNKSKEPETNTFESQSRESPLEVGIGSFLLYLVVASKTELDKMTNLRMQMEMFLLNAKEQLQKKDTPMSSNEASGFQFSPQEFSNLASSIFQESSSSVLQEEYTEFEVSEPEDYRRGTDCNSKLQAEVGRLPLGEKAEDRQTKHQIQRQCKLKDNEVTKSHIPEMVVSDERYGVCPYELDKKLHELLETRQQEELVKLETALNRVERRLQEKETEVSWWKDAARLLAQRVPESSRSGLEWCNPDSSTCSERSVPRSYEACSIHRTSFSR</sequence>